<feature type="transit peptide" description="Chloroplast" evidence="1">
    <location>
        <begin position="1"/>
        <end position="40"/>
    </location>
</feature>
<feature type="chain" id="PRO_0000394543" description="Thioredoxin-like protein HCF164, chloroplastic">
    <location>
        <begin position="41"/>
        <end position="261"/>
    </location>
</feature>
<feature type="domain" description="Thioredoxin" evidence="2">
    <location>
        <begin position="101"/>
        <end position="229"/>
    </location>
</feature>
<feature type="region of interest" description="Disordered" evidence="3">
    <location>
        <begin position="39"/>
        <end position="91"/>
    </location>
</feature>
<feature type="compositionally biased region" description="Low complexity" evidence="3">
    <location>
        <begin position="63"/>
        <end position="84"/>
    </location>
</feature>
<feature type="active site" description="Nucleophile" evidence="1">
    <location>
        <position position="150"/>
    </location>
</feature>
<feature type="active site" description="Nucleophile" evidence="1">
    <location>
        <position position="153"/>
    </location>
</feature>
<feature type="disulfide bond" description="Redox-active" evidence="2">
    <location>
        <begin position="150"/>
        <end position="153"/>
    </location>
</feature>
<evidence type="ECO:0000255" key="1"/>
<evidence type="ECO:0000255" key="2">
    <source>
        <dbReference type="PROSITE-ProRule" id="PRU00691"/>
    </source>
</evidence>
<evidence type="ECO:0000256" key="3">
    <source>
        <dbReference type="SAM" id="MobiDB-lite"/>
    </source>
</evidence>
<evidence type="ECO:0000269" key="4">
    <source>
    </source>
</evidence>
<evidence type="ECO:0000269" key="5">
    <source>
    </source>
</evidence>
<evidence type="ECO:0000269" key="6">
    <source>
    </source>
</evidence>
<evidence type="ECO:0000303" key="7">
    <source>
    </source>
</evidence>
<evidence type="ECO:0000305" key="8"/>
<evidence type="ECO:0000312" key="9">
    <source>
        <dbReference type="Araport" id="AT4G37200"/>
    </source>
</evidence>
<evidence type="ECO:0000312" key="10">
    <source>
        <dbReference type="EMBL" id="CAB16778.1"/>
    </source>
</evidence>
<comment type="function">
    <text evidence="4 5">Thiol-disulfide oxidoreductase that participates in various redox reactions in the chloroplast. Mediates the reduction of PSI-N in the thylakoid lumen. May interact and probably reduce other target proteins of the thylakoid membrane, such as FTSH2, FTSH8, LHCB5, atpA, atpB, atpE, petA and petC. Involved in the biogenesis of the plastid cytochrome b6f complex. Reducing equivalents are provided by stromal M-type thioredoxins and probably transduced through the thylakoid membrane by CCDA. Possesses low insulin disulfide bonds reducing activity.</text>
</comment>
<comment type="subunit">
    <text evidence="6">Interacts in vitro with LTO1.</text>
</comment>
<comment type="subcellular location">
    <subcellularLocation>
        <location evidence="4 5">Plastid</location>
        <location evidence="4 5">Chloroplast thylakoid membrane</location>
        <topology evidence="4 5">Peripheral membrane protein</topology>
        <orientation evidence="4 5">Lumenal side</orientation>
    </subcellularLocation>
</comment>
<comment type="disruption phenotype">
    <text evidence="4">High chlorophyll fluorescence and deficiency in the accumulation of the cytochrome b6f complex subunits.</text>
</comment>
<comment type="similarity">
    <text evidence="8">Belongs to the thioredoxin family.</text>
</comment>
<comment type="caution">
    <text evidence="8">The active site contains a CEVC motif which differs from the conserved CGPC motif.</text>
</comment>
<gene>
    <name evidence="7" type="primary">HCF164</name>
    <name evidence="9" type="ordered locus">At4g37200</name>
    <name evidence="10" type="ORF">C7A10.160</name>
</gene>
<protein>
    <recommendedName>
        <fullName evidence="7">Thioredoxin-like protein HCF164, chloroplastic</fullName>
    </recommendedName>
    <alternativeName>
        <fullName evidence="7">Protein HIGH CHLOROPHYLL FLUORESCENCE 164</fullName>
    </alternativeName>
</protein>
<proteinExistence type="evidence at protein level"/>
<sequence>MARLVFSLNLPSSHGFNLSPRNLQSFFVTQTGAPRFRAVRCKPNPESSETKQEKLVIDNGETSSASKEVESSSSVADSSSSSSSGFPESPNKDINRRVAAVTVIAALSLFVSTRLDFGISLKDLTASALPYEEALSNGKPTVVEFYADWCEVCRELAPDVYKIEQQYKDKVNFVMLNVDNTKWEQELDEFGVEGIPHFAFLDREGNEEGNVVGRLPRQYLVENVNALAAGKQSIPYARAVGQYSSSESRKVHQVTDPLSHG</sequence>
<keyword id="KW-0150">Chloroplast</keyword>
<keyword id="KW-1015">Disulfide bond</keyword>
<keyword id="KW-0249">Electron transport</keyword>
<keyword id="KW-0472">Membrane</keyword>
<keyword id="KW-0934">Plastid</keyword>
<keyword id="KW-0676">Redox-active center</keyword>
<keyword id="KW-1185">Reference proteome</keyword>
<keyword id="KW-0793">Thylakoid</keyword>
<keyword id="KW-0809">Transit peptide</keyword>
<keyword id="KW-0813">Transport</keyword>
<organism>
    <name type="scientific">Arabidopsis thaliana</name>
    <name type="common">Mouse-ear cress</name>
    <dbReference type="NCBI Taxonomy" id="3702"/>
    <lineage>
        <taxon>Eukaryota</taxon>
        <taxon>Viridiplantae</taxon>
        <taxon>Streptophyta</taxon>
        <taxon>Embryophyta</taxon>
        <taxon>Tracheophyta</taxon>
        <taxon>Spermatophyta</taxon>
        <taxon>Magnoliopsida</taxon>
        <taxon>eudicotyledons</taxon>
        <taxon>Gunneridae</taxon>
        <taxon>Pentapetalae</taxon>
        <taxon>rosids</taxon>
        <taxon>malvids</taxon>
        <taxon>Brassicales</taxon>
        <taxon>Brassicaceae</taxon>
        <taxon>Camelineae</taxon>
        <taxon>Arabidopsis</taxon>
    </lineage>
</organism>
<name>TR164_ARATH</name>
<accession>O23166</accession>
<dbReference type="EMBL" id="AJ293262">
    <property type="protein sequence ID" value="CAC19858.1"/>
    <property type="molecule type" value="mRNA"/>
</dbReference>
<dbReference type="EMBL" id="Z99707">
    <property type="protein sequence ID" value="CAB16778.1"/>
    <property type="molecule type" value="Genomic_DNA"/>
</dbReference>
<dbReference type="EMBL" id="AL161590">
    <property type="protein sequence ID" value="CAB80386.1"/>
    <property type="molecule type" value="Genomic_DNA"/>
</dbReference>
<dbReference type="EMBL" id="CP002687">
    <property type="protein sequence ID" value="AEE86766.1"/>
    <property type="molecule type" value="Genomic_DNA"/>
</dbReference>
<dbReference type="EMBL" id="AY075671">
    <property type="protein sequence ID" value="AAL77678.1"/>
    <property type="molecule type" value="mRNA"/>
</dbReference>
<dbReference type="EMBL" id="AY097426">
    <property type="protein sequence ID" value="AAM19942.1"/>
    <property type="molecule type" value="mRNA"/>
</dbReference>
<dbReference type="PIR" id="E85439">
    <property type="entry name" value="E85439"/>
</dbReference>
<dbReference type="RefSeq" id="NP_195437.1">
    <property type="nucleotide sequence ID" value="NM_119883.3"/>
</dbReference>
<dbReference type="SMR" id="O23166"/>
<dbReference type="BioGRID" id="15155">
    <property type="interactions" value="1"/>
</dbReference>
<dbReference type="FunCoup" id="O23166">
    <property type="interactions" value="899"/>
</dbReference>
<dbReference type="STRING" id="3702.O23166"/>
<dbReference type="TCDB" id="3.D.3.5.2">
    <property type="family name" value="the proton-translocating quinol:cytochrome c reductase (qcr) superfamily"/>
</dbReference>
<dbReference type="iPTMnet" id="O23166"/>
<dbReference type="PaxDb" id="3702-AT4G37200.1"/>
<dbReference type="ProteomicsDB" id="228462"/>
<dbReference type="EnsemblPlants" id="AT4G37200.1">
    <property type="protein sequence ID" value="AT4G37200.1"/>
    <property type="gene ID" value="AT4G37200"/>
</dbReference>
<dbReference type="GeneID" id="829874"/>
<dbReference type="Gramene" id="AT4G37200.1">
    <property type="protein sequence ID" value="AT4G37200.1"/>
    <property type="gene ID" value="AT4G37200"/>
</dbReference>
<dbReference type="KEGG" id="ath:AT4G37200"/>
<dbReference type="Araport" id="AT4G37200"/>
<dbReference type="TAIR" id="AT4G37200">
    <property type="gene designation" value="HCF164"/>
</dbReference>
<dbReference type="eggNOG" id="KOG0907">
    <property type="taxonomic scope" value="Eukaryota"/>
</dbReference>
<dbReference type="HOGENOM" id="CLU_064833_1_0_1"/>
<dbReference type="InParanoid" id="O23166"/>
<dbReference type="OMA" id="DNTKWLP"/>
<dbReference type="PhylomeDB" id="O23166"/>
<dbReference type="PRO" id="PR:O23166"/>
<dbReference type="Proteomes" id="UP000006548">
    <property type="component" value="Chromosome 4"/>
</dbReference>
<dbReference type="ExpressionAtlas" id="O23166">
    <property type="expression patterns" value="baseline and differential"/>
</dbReference>
<dbReference type="GO" id="GO:0009507">
    <property type="term" value="C:chloroplast"/>
    <property type="evidence" value="ECO:0007005"/>
    <property type="project" value="TAIR"/>
</dbReference>
<dbReference type="GO" id="GO:0009534">
    <property type="term" value="C:chloroplast thylakoid"/>
    <property type="evidence" value="ECO:0000314"/>
    <property type="project" value="TAIR"/>
</dbReference>
<dbReference type="GO" id="GO:0009535">
    <property type="term" value="C:chloroplast thylakoid membrane"/>
    <property type="evidence" value="ECO:0000314"/>
    <property type="project" value="TAIR"/>
</dbReference>
<dbReference type="GO" id="GO:0005886">
    <property type="term" value="C:plasma membrane"/>
    <property type="evidence" value="ECO:0007005"/>
    <property type="project" value="TAIR"/>
</dbReference>
<dbReference type="GO" id="GO:0031977">
    <property type="term" value="C:thylakoid lumen"/>
    <property type="evidence" value="ECO:0000314"/>
    <property type="project" value="UniProtKB"/>
</dbReference>
<dbReference type="GO" id="GO:0016671">
    <property type="term" value="F:oxidoreductase activity, acting on a sulfur group of donors, disulfide as acceptor"/>
    <property type="evidence" value="ECO:0000314"/>
    <property type="project" value="UniProtKB"/>
</dbReference>
<dbReference type="GO" id="GO:0010190">
    <property type="term" value="P:cytochrome b6f complex assembly"/>
    <property type="evidence" value="ECO:0000315"/>
    <property type="project" value="TAIR"/>
</dbReference>
<dbReference type="CDD" id="cd02950">
    <property type="entry name" value="TxlA"/>
    <property type="match status" value="1"/>
</dbReference>
<dbReference type="FunFam" id="3.40.30.10:FF:000145">
    <property type="entry name" value="thioredoxin-like protein HCF164, chloroplastic"/>
    <property type="match status" value="1"/>
</dbReference>
<dbReference type="Gene3D" id="3.40.30.10">
    <property type="entry name" value="Glutaredoxin"/>
    <property type="match status" value="1"/>
</dbReference>
<dbReference type="InterPro" id="IPR036249">
    <property type="entry name" value="Thioredoxin-like_sf"/>
</dbReference>
<dbReference type="InterPro" id="IPR013766">
    <property type="entry name" value="Thioredoxin_domain"/>
</dbReference>
<dbReference type="InterPro" id="IPR044241">
    <property type="entry name" value="TxlA/HCF164"/>
</dbReference>
<dbReference type="PANTHER" id="PTHR47353">
    <property type="entry name" value="THIOREDOXIN-LIKE PROTEIN HCF164, CHLOROPLASTIC"/>
    <property type="match status" value="1"/>
</dbReference>
<dbReference type="PANTHER" id="PTHR47353:SF1">
    <property type="entry name" value="THIOREDOXIN-LIKE PROTEIN HCF164, CHLOROPLASTIC"/>
    <property type="match status" value="1"/>
</dbReference>
<dbReference type="Pfam" id="PF00085">
    <property type="entry name" value="Thioredoxin"/>
    <property type="match status" value="1"/>
</dbReference>
<dbReference type="SUPFAM" id="SSF52833">
    <property type="entry name" value="Thioredoxin-like"/>
    <property type="match status" value="1"/>
</dbReference>
<dbReference type="PROSITE" id="PS51352">
    <property type="entry name" value="THIOREDOXIN_2"/>
    <property type="match status" value="1"/>
</dbReference>
<reference key="1">
    <citation type="journal article" date="2001" name="Plant Cell">
        <title>HCF164 encodes a thioredoxin-like protein involved in the biogenesis of the cytochrome b(6)f complex in Arabidopsis.</title>
        <authorList>
            <person name="Lennartz K."/>
            <person name="Pluecken H."/>
            <person name="Seidler A."/>
            <person name="Westhoff P."/>
            <person name="Bechtold N."/>
            <person name="Meierhoff K."/>
        </authorList>
    </citation>
    <scope>NUCLEOTIDE SEQUENCE [MRNA]</scope>
    <scope>FUNCTION</scope>
    <scope>SUBCELLULAR LOCATION</scope>
    <scope>DISRUPTION PHENOTYPE</scope>
</reference>
<reference key="2">
    <citation type="journal article" date="1998" name="Nature">
        <title>Analysis of 1.9 Mb of contiguous sequence from chromosome 4 of Arabidopsis thaliana.</title>
        <authorList>
            <person name="Bevan M."/>
            <person name="Bancroft I."/>
            <person name="Bent E."/>
            <person name="Love K."/>
            <person name="Goodman H.M."/>
            <person name="Dean C."/>
            <person name="Bergkamp R."/>
            <person name="Dirkse W."/>
            <person name="van Staveren M."/>
            <person name="Stiekema W."/>
            <person name="Drost L."/>
            <person name="Ridley P."/>
            <person name="Hudson S.-A."/>
            <person name="Patel K."/>
            <person name="Murphy G."/>
            <person name="Piffanelli P."/>
            <person name="Wedler H."/>
            <person name="Wedler E."/>
            <person name="Wambutt R."/>
            <person name="Weitzenegger T."/>
            <person name="Pohl T."/>
            <person name="Terryn N."/>
            <person name="Gielen J."/>
            <person name="Villarroel R."/>
            <person name="De Clercq R."/>
            <person name="van Montagu M."/>
            <person name="Lecharny A."/>
            <person name="Aubourg S."/>
            <person name="Gy I."/>
            <person name="Kreis M."/>
            <person name="Lao N."/>
            <person name="Kavanagh T."/>
            <person name="Hempel S."/>
            <person name="Kotter P."/>
            <person name="Entian K.-D."/>
            <person name="Rieger M."/>
            <person name="Schaefer M."/>
            <person name="Funk B."/>
            <person name="Mueller-Auer S."/>
            <person name="Silvey M."/>
            <person name="James R."/>
            <person name="Monfort A."/>
            <person name="Pons A."/>
            <person name="Puigdomenech P."/>
            <person name="Douka A."/>
            <person name="Voukelatou E."/>
            <person name="Milioni D."/>
            <person name="Hatzopoulos P."/>
            <person name="Piravandi E."/>
            <person name="Obermaier B."/>
            <person name="Hilbert H."/>
            <person name="Duesterhoeft A."/>
            <person name="Moores T."/>
            <person name="Jones J.D.G."/>
            <person name="Eneva T."/>
            <person name="Palme K."/>
            <person name="Benes V."/>
            <person name="Rechmann S."/>
            <person name="Ansorge W."/>
            <person name="Cooke R."/>
            <person name="Berger C."/>
            <person name="Delseny M."/>
            <person name="Voet M."/>
            <person name="Volckaert G."/>
            <person name="Mewes H.-W."/>
            <person name="Klosterman S."/>
            <person name="Schueller C."/>
            <person name="Chalwatzis N."/>
        </authorList>
    </citation>
    <scope>NUCLEOTIDE SEQUENCE [LARGE SCALE GENOMIC DNA]</scope>
    <source>
        <strain>cv. Columbia</strain>
    </source>
</reference>
<reference key="3">
    <citation type="journal article" date="1999" name="Nature">
        <title>Sequence and analysis of chromosome 4 of the plant Arabidopsis thaliana.</title>
        <authorList>
            <person name="Mayer K.F.X."/>
            <person name="Schueller C."/>
            <person name="Wambutt R."/>
            <person name="Murphy G."/>
            <person name="Volckaert G."/>
            <person name="Pohl T."/>
            <person name="Duesterhoeft A."/>
            <person name="Stiekema W."/>
            <person name="Entian K.-D."/>
            <person name="Terryn N."/>
            <person name="Harris B."/>
            <person name="Ansorge W."/>
            <person name="Brandt P."/>
            <person name="Grivell L.A."/>
            <person name="Rieger M."/>
            <person name="Weichselgartner M."/>
            <person name="de Simone V."/>
            <person name="Obermaier B."/>
            <person name="Mache R."/>
            <person name="Mueller M."/>
            <person name="Kreis M."/>
            <person name="Delseny M."/>
            <person name="Puigdomenech P."/>
            <person name="Watson M."/>
            <person name="Schmidtheini T."/>
            <person name="Reichert B."/>
            <person name="Portetelle D."/>
            <person name="Perez-Alonso M."/>
            <person name="Boutry M."/>
            <person name="Bancroft I."/>
            <person name="Vos P."/>
            <person name="Hoheisel J."/>
            <person name="Zimmermann W."/>
            <person name="Wedler H."/>
            <person name="Ridley P."/>
            <person name="Langham S.-A."/>
            <person name="McCullagh B."/>
            <person name="Bilham L."/>
            <person name="Robben J."/>
            <person name="van der Schueren J."/>
            <person name="Grymonprez B."/>
            <person name="Chuang Y.-J."/>
            <person name="Vandenbussche F."/>
            <person name="Braeken M."/>
            <person name="Weltjens I."/>
            <person name="Voet M."/>
            <person name="Bastiaens I."/>
            <person name="Aert R."/>
            <person name="Defoor E."/>
            <person name="Weitzenegger T."/>
            <person name="Bothe G."/>
            <person name="Ramsperger U."/>
            <person name="Hilbert H."/>
            <person name="Braun M."/>
            <person name="Holzer E."/>
            <person name="Brandt A."/>
            <person name="Peters S."/>
            <person name="van Staveren M."/>
            <person name="Dirkse W."/>
            <person name="Mooijman P."/>
            <person name="Klein Lankhorst R."/>
            <person name="Rose M."/>
            <person name="Hauf J."/>
            <person name="Koetter P."/>
            <person name="Berneiser S."/>
            <person name="Hempel S."/>
            <person name="Feldpausch M."/>
            <person name="Lamberth S."/>
            <person name="Van den Daele H."/>
            <person name="De Keyser A."/>
            <person name="Buysshaert C."/>
            <person name="Gielen J."/>
            <person name="Villarroel R."/>
            <person name="De Clercq R."/>
            <person name="van Montagu M."/>
            <person name="Rogers J."/>
            <person name="Cronin A."/>
            <person name="Quail M.A."/>
            <person name="Bray-Allen S."/>
            <person name="Clark L."/>
            <person name="Doggett J."/>
            <person name="Hall S."/>
            <person name="Kay M."/>
            <person name="Lennard N."/>
            <person name="McLay K."/>
            <person name="Mayes R."/>
            <person name="Pettett A."/>
            <person name="Rajandream M.A."/>
            <person name="Lyne M."/>
            <person name="Benes V."/>
            <person name="Rechmann S."/>
            <person name="Borkova D."/>
            <person name="Bloecker H."/>
            <person name="Scharfe M."/>
            <person name="Grimm M."/>
            <person name="Loehnert T.-H."/>
            <person name="Dose S."/>
            <person name="de Haan M."/>
            <person name="Maarse A.C."/>
            <person name="Schaefer M."/>
            <person name="Mueller-Auer S."/>
            <person name="Gabel C."/>
            <person name="Fuchs M."/>
            <person name="Fartmann B."/>
            <person name="Granderath K."/>
            <person name="Dauner D."/>
            <person name="Herzl A."/>
            <person name="Neumann S."/>
            <person name="Argiriou A."/>
            <person name="Vitale D."/>
            <person name="Liguori R."/>
            <person name="Piravandi E."/>
            <person name="Massenet O."/>
            <person name="Quigley F."/>
            <person name="Clabauld G."/>
            <person name="Muendlein A."/>
            <person name="Felber R."/>
            <person name="Schnabl S."/>
            <person name="Hiller R."/>
            <person name="Schmidt W."/>
            <person name="Lecharny A."/>
            <person name="Aubourg S."/>
            <person name="Chefdor F."/>
            <person name="Cooke R."/>
            <person name="Berger C."/>
            <person name="Monfort A."/>
            <person name="Casacuberta E."/>
            <person name="Gibbons T."/>
            <person name="Weber N."/>
            <person name="Vandenbol M."/>
            <person name="Bargues M."/>
            <person name="Terol J."/>
            <person name="Torres A."/>
            <person name="Perez-Perez A."/>
            <person name="Purnelle B."/>
            <person name="Bent E."/>
            <person name="Johnson S."/>
            <person name="Tacon D."/>
            <person name="Jesse T."/>
            <person name="Heijnen L."/>
            <person name="Schwarz S."/>
            <person name="Scholler P."/>
            <person name="Heber S."/>
            <person name="Francs P."/>
            <person name="Bielke C."/>
            <person name="Frishman D."/>
            <person name="Haase D."/>
            <person name="Lemcke K."/>
            <person name="Mewes H.-W."/>
            <person name="Stocker S."/>
            <person name="Zaccaria P."/>
            <person name="Bevan M."/>
            <person name="Wilson R.K."/>
            <person name="de la Bastide M."/>
            <person name="Habermann K."/>
            <person name="Parnell L."/>
            <person name="Dedhia N."/>
            <person name="Gnoj L."/>
            <person name="Schutz K."/>
            <person name="Huang E."/>
            <person name="Spiegel L."/>
            <person name="Sekhon M."/>
            <person name="Murray J."/>
            <person name="Sheet P."/>
            <person name="Cordes M."/>
            <person name="Abu-Threideh J."/>
            <person name="Stoneking T."/>
            <person name="Kalicki J."/>
            <person name="Graves T."/>
            <person name="Harmon G."/>
            <person name="Edwards J."/>
            <person name="Latreille P."/>
            <person name="Courtney L."/>
            <person name="Cloud J."/>
            <person name="Abbott A."/>
            <person name="Scott K."/>
            <person name="Johnson D."/>
            <person name="Minx P."/>
            <person name="Bentley D."/>
            <person name="Fulton B."/>
            <person name="Miller N."/>
            <person name="Greco T."/>
            <person name="Kemp K."/>
            <person name="Kramer J."/>
            <person name="Fulton L."/>
            <person name="Mardis E."/>
            <person name="Dante M."/>
            <person name="Pepin K."/>
            <person name="Hillier L.W."/>
            <person name="Nelson J."/>
            <person name="Spieth J."/>
            <person name="Ryan E."/>
            <person name="Andrews S."/>
            <person name="Geisel C."/>
            <person name="Layman D."/>
            <person name="Du H."/>
            <person name="Ali J."/>
            <person name="Berghoff A."/>
            <person name="Jones K."/>
            <person name="Drone K."/>
            <person name="Cotton M."/>
            <person name="Joshu C."/>
            <person name="Antonoiu B."/>
            <person name="Zidanic M."/>
            <person name="Strong C."/>
            <person name="Sun H."/>
            <person name="Lamar B."/>
            <person name="Yordan C."/>
            <person name="Ma P."/>
            <person name="Zhong J."/>
            <person name="Preston R."/>
            <person name="Vil D."/>
            <person name="Shekher M."/>
            <person name="Matero A."/>
            <person name="Shah R."/>
            <person name="Swaby I.K."/>
            <person name="O'Shaughnessy A."/>
            <person name="Rodriguez M."/>
            <person name="Hoffman J."/>
            <person name="Till S."/>
            <person name="Granat S."/>
            <person name="Shohdy N."/>
            <person name="Hasegawa A."/>
            <person name="Hameed A."/>
            <person name="Lodhi M."/>
            <person name="Johnson A."/>
            <person name="Chen E."/>
            <person name="Marra M.A."/>
            <person name="Martienssen R."/>
            <person name="McCombie W.R."/>
        </authorList>
    </citation>
    <scope>NUCLEOTIDE SEQUENCE [LARGE SCALE GENOMIC DNA]</scope>
    <source>
        <strain>cv. Columbia</strain>
    </source>
</reference>
<reference key="4">
    <citation type="journal article" date="2017" name="Plant J.">
        <title>Araport11: a complete reannotation of the Arabidopsis thaliana reference genome.</title>
        <authorList>
            <person name="Cheng C.Y."/>
            <person name="Krishnakumar V."/>
            <person name="Chan A.P."/>
            <person name="Thibaud-Nissen F."/>
            <person name="Schobel S."/>
            <person name="Town C.D."/>
        </authorList>
    </citation>
    <scope>GENOME REANNOTATION</scope>
    <source>
        <strain>cv. Columbia</strain>
    </source>
</reference>
<reference key="5">
    <citation type="journal article" date="2003" name="Science">
        <title>Empirical analysis of transcriptional activity in the Arabidopsis genome.</title>
        <authorList>
            <person name="Yamada K."/>
            <person name="Lim J."/>
            <person name="Dale J.M."/>
            <person name="Chen H."/>
            <person name="Shinn P."/>
            <person name="Palm C.J."/>
            <person name="Southwick A.M."/>
            <person name="Wu H.C."/>
            <person name="Kim C.J."/>
            <person name="Nguyen M."/>
            <person name="Pham P.K."/>
            <person name="Cheuk R.F."/>
            <person name="Karlin-Newmann G."/>
            <person name="Liu S.X."/>
            <person name="Lam B."/>
            <person name="Sakano H."/>
            <person name="Wu T."/>
            <person name="Yu G."/>
            <person name="Miranda M."/>
            <person name="Quach H.L."/>
            <person name="Tripp M."/>
            <person name="Chang C.H."/>
            <person name="Lee J.M."/>
            <person name="Toriumi M.J."/>
            <person name="Chan M.M."/>
            <person name="Tang C.C."/>
            <person name="Onodera C.S."/>
            <person name="Deng J.M."/>
            <person name="Akiyama K."/>
            <person name="Ansari Y."/>
            <person name="Arakawa T."/>
            <person name="Banh J."/>
            <person name="Banno F."/>
            <person name="Bowser L."/>
            <person name="Brooks S.Y."/>
            <person name="Carninci P."/>
            <person name="Chao Q."/>
            <person name="Choy N."/>
            <person name="Enju A."/>
            <person name="Goldsmith A.D."/>
            <person name="Gurjal M."/>
            <person name="Hansen N.F."/>
            <person name="Hayashizaki Y."/>
            <person name="Johnson-Hopson C."/>
            <person name="Hsuan V.W."/>
            <person name="Iida K."/>
            <person name="Karnes M."/>
            <person name="Khan S."/>
            <person name="Koesema E."/>
            <person name="Ishida J."/>
            <person name="Jiang P.X."/>
            <person name="Jones T."/>
            <person name="Kawai J."/>
            <person name="Kamiya A."/>
            <person name="Meyers C."/>
            <person name="Nakajima M."/>
            <person name="Narusaka M."/>
            <person name="Seki M."/>
            <person name="Sakurai T."/>
            <person name="Satou M."/>
            <person name="Tamse R."/>
            <person name="Vaysberg M."/>
            <person name="Wallender E.K."/>
            <person name="Wong C."/>
            <person name="Yamamura Y."/>
            <person name="Yuan S."/>
            <person name="Shinozaki K."/>
            <person name="Davis R.W."/>
            <person name="Theologis A."/>
            <person name="Ecker J.R."/>
        </authorList>
    </citation>
    <scope>NUCLEOTIDE SEQUENCE [LARGE SCALE MRNA]</scope>
    <source>
        <strain>cv. Columbia</strain>
    </source>
</reference>
<reference key="6">
    <citation type="journal article" date="2006" name="J. Biol. Chem.">
        <title>HCF164 receives reducing equivalents from stromal thioredoxin across the thylakoid membrane and mediates reduction of target proteins in the thylakoid lumen.</title>
        <authorList>
            <person name="Motohashi K."/>
            <person name="Hisabori T."/>
        </authorList>
    </citation>
    <scope>FUNCTION</scope>
    <scope>SUBCELLULAR LOCATION</scope>
</reference>
<reference key="7">
    <citation type="journal article" date="2009" name="Mol. Plant">
        <title>Comparative genomic study of the thioredoxin family in photosynthetic organisms with emphasis on Populus trichocarpa.</title>
        <authorList>
            <person name="Chibani K."/>
            <person name="Wingsle G."/>
            <person name="Jacquot J.P."/>
            <person name="Gelhaye E."/>
            <person name="Rouhier N."/>
        </authorList>
    </citation>
    <scope>GENE FAMILY</scope>
    <scope>NOMENCLATURE</scope>
</reference>
<reference key="8">
    <citation type="journal article" date="2014" name="Protein Pept. Lett.">
        <title>Identification of potential targets for thylakoid oxidoreductase AtVKOR/LTO1 in chloroplasts.</title>
        <authorList>
            <person name="Lu Y."/>
            <person name="Du J.J."/>
            <person name="Yu Z.B."/>
            <person name="Peng J.J."/>
            <person name="Xu J.N."/>
            <person name="Wang X.Y."/>
        </authorList>
    </citation>
    <scope>INTERACTION WITH LTO1</scope>
</reference>